<feature type="chain" id="PRO_0000427789" description="Molybdopterin molybdenumtransferase 2">
    <location>
        <begin position="1"/>
        <end position="405"/>
    </location>
</feature>
<evidence type="ECO:0000250" key="1"/>
<evidence type="ECO:0000305" key="2"/>
<dbReference type="EC" id="2.10.1.1"/>
<dbReference type="EMBL" id="AE000516">
    <property type="protein sequence ID" value="AAK44677.1"/>
    <property type="molecule type" value="Genomic_DNA"/>
</dbReference>
<dbReference type="PIR" id="G70829">
    <property type="entry name" value="G70829"/>
</dbReference>
<dbReference type="SMR" id="P9WJQ4"/>
<dbReference type="KEGG" id="mtc:MT0454"/>
<dbReference type="PATRIC" id="fig|83331.31.peg.481"/>
<dbReference type="HOGENOM" id="CLU_010186_7_0_11"/>
<dbReference type="UniPathway" id="UPA00344"/>
<dbReference type="Proteomes" id="UP000001020">
    <property type="component" value="Chromosome"/>
</dbReference>
<dbReference type="GO" id="GO:0005829">
    <property type="term" value="C:cytosol"/>
    <property type="evidence" value="ECO:0007669"/>
    <property type="project" value="TreeGrafter"/>
</dbReference>
<dbReference type="GO" id="GO:0046872">
    <property type="term" value="F:metal ion binding"/>
    <property type="evidence" value="ECO:0007669"/>
    <property type="project" value="UniProtKB-KW"/>
</dbReference>
<dbReference type="GO" id="GO:0061599">
    <property type="term" value="F:molybdopterin molybdotransferase activity"/>
    <property type="evidence" value="ECO:0007669"/>
    <property type="project" value="UniProtKB-EC"/>
</dbReference>
<dbReference type="GO" id="GO:0006777">
    <property type="term" value="P:Mo-molybdopterin cofactor biosynthetic process"/>
    <property type="evidence" value="ECO:0007669"/>
    <property type="project" value="UniProtKB-KW"/>
</dbReference>
<dbReference type="CDD" id="cd00887">
    <property type="entry name" value="MoeA"/>
    <property type="match status" value="1"/>
</dbReference>
<dbReference type="FunFam" id="2.170.190.11:FF:000001">
    <property type="entry name" value="Molybdopterin molybdenumtransferase"/>
    <property type="match status" value="1"/>
</dbReference>
<dbReference type="FunFam" id="3.40.980.10:FF:000004">
    <property type="entry name" value="Molybdopterin molybdenumtransferase"/>
    <property type="match status" value="1"/>
</dbReference>
<dbReference type="Gene3D" id="3.40.980.10">
    <property type="entry name" value="MoaB/Mog-like domain"/>
    <property type="match status" value="1"/>
</dbReference>
<dbReference type="Gene3D" id="2.40.340.10">
    <property type="entry name" value="MoeA, C-terminal, domain IV"/>
    <property type="match status" value="1"/>
</dbReference>
<dbReference type="Gene3D" id="3.90.105.10">
    <property type="entry name" value="Molybdopterin biosynthesis moea protein, domain 2"/>
    <property type="match status" value="1"/>
</dbReference>
<dbReference type="Gene3D" id="2.170.190.11">
    <property type="entry name" value="Molybdopterin biosynthesis moea protein, domain 3"/>
    <property type="match status" value="1"/>
</dbReference>
<dbReference type="InterPro" id="IPR036425">
    <property type="entry name" value="MoaB/Mog-like_dom_sf"/>
</dbReference>
<dbReference type="InterPro" id="IPR001453">
    <property type="entry name" value="MoaB/Mog_dom"/>
</dbReference>
<dbReference type="InterPro" id="IPR038987">
    <property type="entry name" value="MoeA-like"/>
</dbReference>
<dbReference type="InterPro" id="IPR005111">
    <property type="entry name" value="MoeA_C_domain_IV"/>
</dbReference>
<dbReference type="InterPro" id="IPR036688">
    <property type="entry name" value="MoeA_C_domain_IV_sf"/>
</dbReference>
<dbReference type="InterPro" id="IPR005110">
    <property type="entry name" value="MoeA_linker/N"/>
</dbReference>
<dbReference type="InterPro" id="IPR036135">
    <property type="entry name" value="MoeA_linker/N_sf"/>
</dbReference>
<dbReference type="NCBIfam" id="NF045515">
    <property type="entry name" value="Glp_gephyrin"/>
    <property type="match status" value="1"/>
</dbReference>
<dbReference type="NCBIfam" id="TIGR00177">
    <property type="entry name" value="molyb_syn"/>
    <property type="match status" value="1"/>
</dbReference>
<dbReference type="PANTHER" id="PTHR10192:SF5">
    <property type="entry name" value="GEPHYRIN"/>
    <property type="match status" value="1"/>
</dbReference>
<dbReference type="PANTHER" id="PTHR10192">
    <property type="entry name" value="MOLYBDOPTERIN BIOSYNTHESIS PROTEIN"/>
    <property type="match status" value="1"/>
</dbReference>
<dbReference type="Pfam" id="PF00994">
    <property type="entry name" value="MoCF_biosynth"/>
    <property type="match status" value="1"/>
</dbReference>
<dbReference type="Pfam" id="PF03454">
    <property type="entry name" value="MoeA_C"/>
    <property type="match status" value="1"/>
</dbReference>
<dbReference type="Pfam" id="PF03453">
    <property type="entry name" value="MoeA_N"/>
    <property type="match status" value="1"/>
</dbReference>
<dbReference type="SMART" id="SM00852">
    <property type="entry name" value="MoCF_biosynth"/>
    <property type="match status" value="1"/>
</dbReference>
<dbReference type="SUPFAM" id="SSF63867">
    <property type="entry name" value="MoeA C-terminal domain-like"/>
    <property type="match status" value="1"/>
</dbReference>
<dbReference type="SUPFAM" id="SSF63882">
    <property type="entry name" value="MoeA N-terminal region -like"/>
    <property type="match status" value="1"/>
</dbReference>
<dbReference type="SUPFAM" id="SSF53218">
    <property type="entry name" value="Molybdenum cofactor biosynthesis proteins"/>
    <property type="match status" value="1"/>
</dbReference>
<organism>
    <name type="scientific">Mycobacterium tuberculosis (strain CDC 1551 / Oshkosh)</name>
    <dbReference type="NCBI Taxonomy" id="83331"/>
    <lineage>
        <taxon>Bacteria</taxon>
        <taxon>Bacillati</taxon>
        <taxon>Actinomycetota</taxon>
        <taxon>Actinomycetes</taxon>
        <taxon>Mycobacteriales</taxon>
        <taxon>Mycobacteriaceae</taxon>
        <taxon>Mycobacterium</taxon>
        <taxon>Mycobacterium tuberculosis complex</taxon>
    </lineage>
</organism>
<protein>
    <recommendedName>
        <fullName>Molybdopterin molybdenumtransferase 2</fullName>
        <shortName>MPT Mo-transferase 2</shortName>
        <ecNumber>2.10.1.1</ecNumber>
    </recommendedName>
</protein>
<keyword id="KW-0460">Magnesium</keyword>
<keyword id="KW-0479">Metal-binding</keyword>
<keyword id="KW-0500">Molybdenum</keyword>
<keyword id="KW-0501">Molybdenum cofactor biosynthesis</keyword>
<keyword id="KW-1185">Reference proteome</keyword>
<keyword id="KW-0808">Transferase</keyword>
<comment type="function">
    <text evidence="1">Catalyzes the insertion of molybdate into adenylated molybdopterin with the concomitant release of AMP.</text>
</comment>
<comment type="catalytic activity">
    <reaction>
        <text>adenylyl-molybdopterin + molybdate = Mo-molybdopterin + AMP + H(+)</text>
        <dbReference type="Rhea" id="RHEA:35047"/>
        <dbReference type="ChEBI" id="CHEBI:15378"/>
        <dbReference type="ChEBI" id="CHEBI:36264"/>
        <dbReference type="ChEBI" id="CHEBI:62727"/>
        <dbReference type="ChEBI" id="CHEBI:71302"/>
        <dbReference type="ChEBI" id="CHEBI:456215"/>
        <dbReference type="EC" id="2.10.1.1"/>
    </reaction>
</comment>
<comment type="cofactor">
    <cofactor evidence="1">
        <name>Mg(2+)</name>
        <dbReference type="ChEBI" id="CHEBI:18420"/>
    </cofactor>
    <text evidence="1">Binds 1 Mg(2+) ion per subunit.</text>
</comment>
<comment type="pathway">
    <text>Cofactor biosynthesis; molybdopterin biosynthesis.</text>
</comment>
<comment type="similarity">
    <text evidence="2">Belongs to the MoeA family.</text>
</comment>
<sequence>MRSVQEHQRVVAEMMRACRPITVPLTQAQGLVLGGDVVAPLSLPVFDNSAMDGYAVRAEDTSGATPQNPVMLPVAEDIPAGRADMLTLQPVTAHRIMTGAPVPTGATAIVPVEATDGGVDSVAIRQQATPGKHIRRSGEDVAAGTTVLHNGQIVTPAVLGLAAALGLAELPVLPRQRVLVISTGSELASPGTPLQPGQIYESNSIMLAAAVRDAGAAVVATATAGDDVAQFGAILDRYAVDADLIITSGGVSAGAYEVVKDAFGSADYRGGDHGVEFVKVAMQPGMPQGVGRVAGTPIVTLPGNPVSALVSFEVFIRPPLRMAMGLPDPYRPHRSAVLTASLTSPRGKRQFRRAILDHQAGTVISYGPPASHHLRWLASANGLLDIPEDVVEVAAGTQLQVWDLT</sequence>
<proteinExistence type="inferred from homology"/>
<name>MOEA2_MYCTO</name>
<accession>P9WJQ4</accession>
<accession>L0T5D3</accession>
<accession>O53725</accession>
<reference key="1">
    <citation type="journal article" date="2002" name="J. Bacteriol.">
        <title>Whole-genome comparison of Mycobacterium tuberculosis clinical and laboratory strains.</title>
        <authorList>
            <person name="Fleischmann R.D."/>
            <person name="Alland D."/>
            <person name="Eisen J.A."/>
            <person name="Carpenter L."/>
            <person name="White O."/>
            <person name="Peterson J.D."/>
            <person name="DeBoy R.T."/>
            <person name="Dodson R.J."/>
            <person name="Gwinn M.L."/>
            <person name="Haft D.H."/>
            <person name="Hickey E.K."/>
            <person name="Kolonay J.F."/>
            <person name="Nelson W.C."/>
            <person name="Umayam L.A."/>
            <person name="Ermolaeva M.D."/>
            <person name="Salzberg S.L."/>
            <person name="Delcher A."/>
            <person name="Utterback T.R."/>
            <person name="Weidman J.F."/>
            <person name="Khouri H.M."/>
            <person name="Gill J."/>
            <person name="Mikula A."/>
            <person name="Bishai W."/>
            <person name="Jacobs W.R. Jr."/>
            <person name="Venter J.C."/>
            <person name="Fraser C.M."/>
        </authorList>
    </citation>
    <scope>NUCLEOTIDE SEQUENCE [LARGE SCALE GENOMIC DNA]</scope>
    <source>
        <strain>CDC 1551 / Oshkosh</strain>
    </source>
</reference>
<gene>
    <name type="primary">moaE2</name>
    <name type="ordered locus">MT0454</name>
</gene>